<protein>
    <recommendedName>
        <fullName>Small ribosomal subunit protein eS1</fullName>
    </recommendedName>
    <alternativeName>
        <fullName evidence="3">40S ribosomal protein S3a</fullName>
    </alternativeName>
</protein>
<keyword id="KW-0002">3D-structure</keyword>
<keyword id="KW-0007">Acetylation</keyword>
<keyword id="KW-0013">ADP-ribosylation</keyword>
<keyword id="KW-0963">Cytoplasm</keyword>
<keyword id="KW-0221">Differentiation</keyword>
<keyword id="KW-1017">Isopeptide bond</keyword>
<keyword id="KW-0539">Nucleus</keyword>
<keyword id="KW-0597">Phosphoprotein</keyword>
<keyword id="KW-1185">Reference proteome</keyword>
<keyword id="KW-0687">Ribonucleoprotein</keyword>
<keyword id="KW-0689">Ribosomal protein</keyword>
<keyword id="KW-0832">Ubl conjugation</keyword>
<gene>
    <name evidence="3" type="primary">RPS3A</name>
</gene>
<dbReference type="EMBL" id="AAGW02045887">
    <property type="status" value="NOT_ANNOTATED_CDS"/>
    <property type="molecule type" value="Genomic_DNA"/>
</dbReference>
<dbReference type="EMBL" id="AAGW02046150">
    <property type="status" value="NOT_ANNOTATED_CDS"/>
    <property type="molecule type" value="Genomic_DNA"/>
</dbReference>
<dbReference type="EMBL" id="AAGW02060912">
    <property type="status" value="NOT_ANNOTATED_CDS"/>
    <property type="molecule type" value="Genomic_DNA"/>
</dbReference>
<dbReference type="RefSeq" id="XP_002711475.1">
    <property type="nucleotide sequence ID" value="XM_002711429.3"/>
</dbReference>
<dbReference type="RefSeq" id="XP_002716948.1">
    <property type="nucleotide sequence ID" value="XM_002716902.5"/>
</dbReference>
<dbReference type="RefSeq" id="XP_002720434.1">
    <property type="nucleotide sequence ID" value="XM_002720388.3"/>
</dbReference>
<dbReference type="PDB" id="3JAG">
    <property type="method" value="EM"/>
    <property type="resolution" value="3.65 A"/>
    <property type="chains" value="BB=21-233"/>
</dbReference>
<dbReference type="PDB" id="3JAH">
    <property type="method" value="EM"/>
    <property type="resolution" value="3.45 A"/>
    <property type="chains" value="BB=21-233"/>
</dbReference>
<dbReference type="PDB" id="3JAI">
    <property type="method" value="EM"/>
    <property type="resolution" value="3.65 A"/>
    <property type="chains" value="BB=21-233"/>
</dbReference>
<dbReference type="PDB" id="4D5L">
    <property type="method" value="EM"/>
    <property type="resolution" value="9.00 A"/>
    <property type="chains" value="B=1-264"/>
</dbReference>
<dbReference type="PDB" id="4D61">
    <property type="method" value="EM"/>
    <property type="resolution" value="9.00 A"/>
    <property type="chains" value="B=1-264"/>
</dbReference>
<dbReference type="PDB" id="5LZS">
    <property type="method" value="EM"/>
    <property type="resolution" value="3.31 A"/>
    <property type="chains" value="BB=1-264"/>
</dbReference>
<dbReference type="PDB" id="5LZT">
    <property type="method" value="EM"/>
    <property type="resolution" value="3.65 A"/>
    <property type="chains" value="BB=1-264"/>
</dbReference>
<dbReference type="PDB" id="5LZU">
    <property type="method" value="EM"/>
    <property type="resolution" value="3.75 A"/>
    <property type="chains" value="BB=1-264"/>
</dbReference>
<dbReference type="PDB" id="5LZV">
    <property type="method" value="EM"/>
    <property type="resolution" value="3.35 A"/>
    <property type="chains" value="BB=1-264"/>
</dbReference>
<dbReference type="PDB" id="5LZW">
    <property type="method" value="EM"/>
    <property type="resolution" value="3.53 A"/>
    <property type="chains" value="BB=1-264"/>
</dbReference>
<dbReference type="PDB" id="5LZX">
    <property type="method" value="EM"/>
    <property type="resolution" value="3.67 A"/>
    <property type="chains" value="BB=1-264"/>
</dbReference>
<dbReference type="PDB" id="5LZY">
    <property type="method" value="EM"/>
    <property type="resolution" value="3.99 A"/>
    <property type="chains" value="BB=1-264"/>
</dbReference>
<dbReference type="PDB" id="5LZZ">
    <property type="method" value="EM"/>
    <property type="resolution" value="3.47 A"/>
    <property type="chains" value="BB=1-264"/>
</dbReference>
<dbReference type="PDB" id="6D90">
    <property type="method" value="EM"/>
    <property type="resolution" value="3.20 A"/>
    <property type="chains" value="CC=1-264"/>
</dbReference>
<dbReference type="PDB" id="6D9J">
    <property type="method" value="EM"/>
    <property type="resolution" value="3.20 A"/>
    <property type="chains" value="CC=1-264"/>
</dbReference>
<dbReference type="PDB" id="6GZ3">
    <property type="method" value="EM"/>
    <property type="resolution" value="3.60 A"/>
    <property type="chains" value="BB=22-233"/>
</dbReference>
<dbReference type="PDB" id="6HCF">
    <property type="method" value="EM"/>
    <property type="resolution" value="3.90 A"/>
    <property type="chains" value="C1=1-264"/>
</dbReference>
<dbReference type="PDB" id="6HCJ">
    <property type="method" value="EM"/>
    <property type="resolution" value="3.80 A"/>
    <property type="chains" value="C2=1-264"/>
</dbReference>
<dbReference type="PDB" id="6HCM">
    <property type="method" value="EM"/>
    <property type="resolution" value="6.80 A"/>
    <property type="chains" value="C1=1-264"/>
</dbReference>
<dbReference type="PDB" id="6HCQ">
    <property type="method" value="EM"/>
    <property type="resolution" value="6.50 A"/>
    <property type="chains" value="C2=1-264"/>
</dbReference>
<dbReference type="PDB" id="6MTB">
    <property type="method" value="EM"/>
    <property type="resolution" value="3.60 A"/>
    <property type="chains" value="BB=21-233"/>
</dbReference>
<dbReference type="PDB" id="6MTC">
    <property type="method" value="EM"/>
    <property type="resolution" value="3.40 A"/>
    <property type="chains" value="BB=21-233"/>
</dbReference>
<dbReference type="PDB" id="6MTD">
    <property type="method" value="EM"/>
    <property type="resolution" value="3.30 A"/>
    <property type="chains" value="BB=21-233"/>
</dbReference>
<dbReference type="PDB" id="6MTE">
    <property type="method" value="EM"/>
    <property type="resolution" value="3.40 A"/>
    <property type="chains" value="BB=21-233"/>
</dbReference>
<dbReference type="PDB" id="6P4G">
    <property type="method" value="EM"/>
    <property type="resolution" value="3.10 A"/>
    <property type="chains" value="C=1-264"/>
</dbReference>
<dbReference type="PDB" id="6P4H">
    <property type="method" value="EM"/>
    <property type="resolution" value="3.20 A"/>
    <property type="chains" value="C=1-264"/>
</dbReference>
<dbReference type="PDB" id="6P5I">
    <property type="method" value="EM"/>
    <property type="resolution" value="3.10 A"/>
    <property type="chains" value="C=1-264"/>
</dbReference>
<dbReference type="PDB" id="6P5J">
    <property type="method" value="EM"/>
    <property type="resolution" value="3.10 A"/>
    <property type="chains" value="C=1-264"/>
</dbReference>
<dbReference type="PDB" id="6P5K">
    <property type="method" value="EM"/>
    <property type="resolution" value="3.10 A"/>
    <property type="chains" value="C=1-264"/>
</dbReference>
<dbReference type="PDB" id="6P5N">
    <property type="method" value="EM"/>
    <property type="resolution" value="3.20 A"/>
    <property type="chains" value="C=1-264"/>
</dbReference>
<dbReference type="PDB" id="6R5Q">
    <property type="method" value="EM"/>
    <property type="resolution" value="3.00 A"/>
    <property type="chains" value="u=21-233"/>
</dbReference>
<dbReference type="PDB" id="6R6G">
    <property type="method" value="EM"/>
    <property type="resolution" value="3.70 A"/>
    <property type="chains" value="u=21-233"/>
</dbReference>
<dbReference type="PDB" id="6R6P">
    <property type="method" value="EM"/>
    <property type="resolution" value="3.10 A"/>
    <property type="chains" value="u=21-233"/>
</dbReference>
<dbReference type="PDB" id="6R7Q">
    <property type="method" value="EM"/>
    <property type="resolution" value="3.90 A"/>
    <property type="chains" value="u=21-233"/>
</dbReference>
<dbReference type="PDB" id="6SGC">
    <property type="method" value="EM"/>
    <property type="resolution" value="2.80 A"/>
    <property type="chains" value="C1=1-264"/>
</dbReference>
<dbReference type="PDB" id="6W2S">
    <property type="method" value="EM"/>
    <property type="resolution" value="3.00 A"/>
    <property type="chains" value="C=1-264"/>
</dbReference>
<dbReference type="PDB" id="6W2T">
    <property type="method" value="EM"/>
    <property type="resolution" value="3.36 A"/>
    <property type="chains" value="C=1-264"/>
</dbReference>
<dbReference type="PDB" id="6ZVK">
    <property type="method" value="EM"/>
    <property type="resolution" value="3.49 A"/>
    <property type="chains" value="V3=21-233"/>
</dbReference>
<dbReference type="PDB" id="7A01">
    <property type="method" value="EM"/>
    <property type="resolution" value="3.60 A"/>
    <property type="chains" value="V3=21-233"/>
</dbReference>
<dbReference type="PDB" id="7JQB">
    <property type="method" value="EM"/>
    <property type="resolution" value="2.70 A"/>
    <property type="chains" value="C=1-264"/>
</dbReference>
<dbReference type="PDB" id="7JQC">
    <property type="method" value="EM"/>
    <property type="resolution" value="3.30 A"/>
    <property type="chains" value="C=1-264"/>
</dbReference>
<dbReference type="PDB" id="7MDZ">
    <property type="method" value="EM"/>
    <property type="resolution" value="3.20 A"/>
    <property type="chains" value="BB=1-264"/>
</dbReference>
<dbReference type="PDB" id="7NWG">
    <property type="method" value="EM"/>
    <property type="resolution" value="3.80 A"/>
    <property type="chains" value="C2=1-264"/>
</dbReference>
<dbReference type="PDB" id="7O7Y">
    <property type="method" value="EM"/>
    <property type="resolution" value="2.20 A"/>
    <property type="chains" value="Aa=1-264"/>
</dbReference>
<dbReference type="PDB" id="7O7Z">
    <property type="method" value="EM"/>
    <property type="resolution" value="2.40 A"/>
    <property type="chains" value="Aa=1-264"/>
</dbReference>
<dbReference type="PDB" id="7O80">
    <property type="method" value="EM"/>
    <property type="resolution" value="2.90 A"/>
    <property type="chains" value="Aa=1-264"/>
</dbReference>
<dbReference type="PDB" id="7O81">
    <property type="method" value="EM"/>
    <property type="resolution" value="3.10 A"/>
    <property type="chains" value="Aa=1-264"/>
</dbReference>
<dbReference type="PDB" id="7OYD">
    <property type="method" value="EM"/>
    <property type="resolution" value="2.30 A"/>
    <property type="chains" value="BB=1-264"/>
</dbReference>
<dbReference type="PDB" id="7SYG">
    <property type="method" value="EM"/>
    <property type="resolution" value="4.30 A"/>
    <property type="chains" value="C=1-264"/>
</dbReference>
<dbReference type="PDB" id="7SYH">
    <property type="method" value="EM"/>
    <property type="resolution" value="4.60 A"/>
    <property type="chains" value="C=1-264"/>
</dbReference>
<dbReference type="PDB" id="7SYI">
    <property type="method" value="EM"/>
    <property type="resolution" value="4.50 A"/>
    <property type="chains" value="C=1-264"/>
</dbReference>
<dbReference type="PDB" id="7SYJ">
    <property type="method" value="EM"/>
    <property type="resolution" value="4.80 A"/>
    <property type="chains" value="C=1-264"/>
</dbReference>
<dbReference type="PDB" id="7SYK">
    <property type="method" value="EM"/>
    <property type="resolution" value="4.20 A"/>
    <property type="chains" value="C=1-264"/>
</dbReference>
<dbReference type="PDB" id="7SYL">
    <property type="method" value="EM"/>
    <property type="resolution" value="4.50 A"/>
    <property type="chains" value="C=1-264"/>
</dbReference>
<dbReference type="PDB" id="7SYM">
    <property type="method" value="EM"/>
    <property type="resolution" value="4.80 A"/>
    <property type="chains" value="C=1-264"/>
</dbReference>
<dbReference type="PDB" id="7SYN">
    <property type="method" value="EM"/>
    <property type="resolution" value="4.00 A"/>
    <property type="chains" value="C=1-264"/>
</dbReference>
<dbReference type="PDB" id="7SYO">
    <property type="method" value="EM"/>
    <property type="resolution" value="4.60 A"/>
    <property type="chains" value="C=1-264"/>
</dbReference>
<dbReference type="PDB" id="7SYP">
    <property type="method" value="EM"/>
    <property type="resolution" value="4.00 A"/>
    <property type="chains" value="C=1-264"/>
</dbReference>
<dbReference type="PDB" id="7SYQ">
    <property type="method" value="EM"/>
    <property type="resolution" value="3.80 A"/>
    <property type="chains" value="C=1-264"/>
</dbReference>
<dbReference type="PDB" id="7SYR">
    <property type="method" value="EM"/>
    <property type="resolution" value="3.60 A"/>
    <property type="chains" value="C=1-264"/>
</dbReference>
<dbReference type="PDB" id="7SYS">
    <property type="method" value="EM"/>
    <property type="resolution" value="3.50 A"/>
    <property type="chains" value="C=1-264"/>
</dbReference>
<dbReference type="PDB" id="7SYT">
    <property type="method" value="EM"/>
    <property type="resolution" value="4.40 A"/>
    <property type="chains" value="C=1-264"/>
</dbReference>
<dbReference type="PDB" id="7SYU">
    <property type="method" value="EM"/>
    <property type="resolution" value="4.60 A"/>
    <property type="chains" value="C=1-264"/>
</dbReference>
<dbReference type="PDB" id="7SYV">
    <property type="method" value="EM"/>
    <property type="resolution" value="3.90 A"/>
    <property type="chains" value="C=1-264"/>
</dbReference>
<dbReference type="PDB" id="7SYW">
    <property type="method" value="EM"/>
    <property type="resolution" value="3.70 A"/>
    <property type="chains" value="C=1-264"/>
</dbReference>
<dbReference type="PDB" id="7SYX">
    <property type="method" value="EM"/>
    <property type="resolution" value="3.70 A"/>
    <property type="chains" value="C=1-264"/>
</dbReference>
<dbReference type="PDB" id="7TOQ">
    <property type="method" value="EM"/>
    <property type="resolution" value="3.10 A"/>
    <property type="chains" value="AS01=21-233"/>
</dbReference>
<dbReference type="PDB" id="7TOR">
    <property type="method" value="EM"/>
    <property type="resolution" value="2.90 A"/>
    <property type="chains" value="AS01=21-233"/>
</dbReference>
<dbReference type="PDB" id="7UCJ">
    <property type="method" value="EM"/>
    <property type="resolution" value="3.10 A"/>
    <property type="chains" value="BB=23-233"/>
</dbReference>
<dbReference type="PDB" id="7UCK">
    <property type="method" value="EM"/>
    <property type="resolution" value="2.80 A"/>
    <property type="chains" value="BB=21-233"/>
</dbReference>
<dbReference type="PDB" id="7ZJW">
    <property type="method" value="EM"/>
    <property type="resolution" value="2.80 A"/>
    <property type="chains" value="SM=1-264"/>
</dbReference>
<dbReference type="PDB" id="7ZJX">
    <property type="method" value="EM"/>
    <property type="resolution" value="3.10 A"/>
    <property type="chains" value="SM=1-264"/>
</dbReference>
<dbReference type="PDB" id="8BHF">
    <property type="method" value="EM"/>
    <property type="resolution" value="3.10 A"/>
    <property type="chains" value="C3=21-233"/>
</dbReference>
<dbReference type="PDB" id="8BTK">
    <property type="method" value="EM"/>
    <property type="resolution" value="3.50 A"/>
    <property type="chains" value="Aa=1-264"/>
</dbReference>
<dbReference type="PDB" id="8P2K">
    <property type="method" value="EM"/>
    <property type="resolution" value="2.90 A"/>
    <property type="chains" value="Aa=1-264"/>
</dbReference>
<dbReference type="PDB" id="8SCB">
    <property type="method" value="EM"/>
    <property type="resolution" value="2.50 A"/>
    <property type="chains" value="BB=1-264"/>
</dbReference>
<dbReference type="PDB" id="8VFT">
    <property type="method" value="EM"/>
    <property type="resolution" value="3.30 A"/>
    <property type="chains" value="BB=1-264"/>
</dbReference>
<dbReference type="PDB" id="9BDL">
    <property type="method" value="EM"/>
    <property type="resolution" value="2.80 A"/>
    <property type="chains" value="AS01=21-233"/>
</dbReference>
<dbReference type="PDB" id="9BDN">
    <property type="method" value="EM"/>
    <property type="resolution" value="3.10 A"/>
    <property type="chains" value="AS01=21-233"/>
</dbReference>
<dbReference type="PDB" id="9BDP">
    <property type="method" value="EM"/>
    <property type="resolution" value="3.70 A"/>
    <property type="chains" value="AS01=21-233"/>
</dbReference>
<dbReference type="PDB" id="9C8K">
    <property type="method" value="EM"/>
    <property type="resolution" value="3.10 A"/>
    <property type="chains" value="B=1-264"/>
</dbReference>
<dbReference type="PDB" id="9F1B">
    <property type="method" value="EM"/>
    <property type="resolution" value="3.01 A"/>
    <property type="chains" value="Aa=1-264"/>
</dbReference>
<dbReference type="PDB" id="9F1C">
    <property type="method" value="EM"/>
    <property type="resolution" value="3.78 A"/>
    <property type="chains" value="Aa=1-264"/>
</dbReference>
<dbReference type="PDB" id="9F1D">
    <property type="method" value="EM"/>
    <property type="resolution" value="3.26 A"/>
    <property type="chains" value="Aa=1-264"/>
</dbReference>
<dbReference type="PDBsum" id="3JAG"/>
<dbReference type="PDBsum" id="3JAH"/>
<dbReference type="PDBsum" id="3JAI"/>
<dbReference type="PDBsum" id="4D5L"/>
<dbReference type="PDBsum" id="4D61"/>
<dbReference type="PDBsum" id="5LZS"/>
<dbReference type="PDBsum" id="5LZT"/>
<dbReference type="PDBsum" id="5LZU"/>
<dbReference type="PDBsum" id="5LZV"/>
<dbReference type="PDBsum" id="5LZW"/>
<dbReference type="PDBsum" id="5LZX"/>
<dbReference type="PDBsum" id="5LZY"/>
<dbReference type="PDBsum" id="5LZZ"/>
<dbReference type="PDBsum" id="6D90"/>
<dbReference type="PDBsum" id="6D9J"/>
<dbReference type="PDBsum" id="6GZ3"/>
<dbReference type="PDBsum" id="6HCF"/>
<dbReference type="PDBsum" id="6HCJ"/>
<dbReference type="PDBsum" id="6HCM"/>
<dbReference type="PDBsum" id="6HCQ"/>
<dbReference type="PDBsum" id="6MTB"/>
<dbReference type="PDBsum" id="6MTC"/>
<dbReference type="PDBsum" id="6MTD"/>
<dbReference type="PDBsum" id="6MTE"/>
<dbReference type="PDBsum" id="6P4G"/>
<dbReference type="PDBsum" id="6P4H"/>
<dbReference type="PDBsum" id="6P5I"/>
<dbReference type="PDBsum" id="6P5J"/>
<dbReference type="PDBsum" id="6P5K"/>
<dbReference type="PDBsum" id="6P5N"/>
<dbReference type="PDBsum" id="6R5Q"/>
<dbReference type="PDBsum" id="6R6G"/>
<dbReference type="PDBsum" id="6R6P"/>
<dbReference type="PDBsum" id="6R7Q"/>
<dbReference type="PDBsum" id="6SGC"/>
<dbReference type="PDBsum" id="6W2S"/>
<dbReference type="PDBsum" id="6W2T"/>
<dbReference type="PDBsum" id="6ZVK"/>
<dbReference type="PDBsum" id="7A01"/>
<dbReference type="PDBsum" id="7JQB"/>
<dbReference type="PDBsum" id="7JQC"/>
<dbReference type="PDBsum" id="7MDZ"/>
<dbReference type="PDBsum" id="7NWG"/>
<dbReference type="PDBsum" id="7O7Y"/>
<dbReference type="PDBsum" id="7O7Z"/>
<dbReference type="PDBsum" id="7O80"/>
<dbReference type="PDBsum" id="7O81"/>
<dbReference type="PDBsum" id="7OYD"/>
<dbReference type="PDBsum" id="7SYG"/>
<dbReference type="PDBsum" id="7SYH"/>
<dbReference type="PDBsum" id="7SYI"/>
<dbReference type="PDBsum" id="7SYJ"/>
<dbReference type="PDBsum" id="7SYK"/>
<dbReference type="PDBsum" id="7SYL"/>
<dbReference type="PDBsum" id="7SYM"/>
<dbReference type="PDBsum" id="7SYN"/>
<dbReference type="PDBsum" id="7SYO"/>
<dbReference type="PDBsum" id="7SYP"/>
<dbReference type="PDBsum" id="7SYQ"/>
<dbReference type="PDBsum" id="7SYR"/>
<dbReference type="PDBsum" id="7SYS"/>
<dbReference type="PDBsum" id="7SYT"/>
<dbReference type="PDBsum" id="7SYU"/>
<dbReference type="PDBsum" id="7SYV"/>
<dbReference type="PDBsum" id="7SYW"/>
<dbReference type="PDBsum" id="7SYX"/>
<dbReference type="PDBsum" id="7TOQ"/>
<dbReference type="PDBsum" id="7TOR"/>
<dbReference type="PDBsum" id="7UCJ"/>
<dbReference type="PDBsum" id="7UCK"/>
<dbReference type="PDBsum" id="7ZJW"/>
<dbReference type="PDBsum" id="7ZJX"/>
<dbReference type="PDBsum" id="8BHF"/>
<dbReference type="PDBsum" id="8BTK"/>
<dbReference type="PDBsum" id="8P2K"/>
<dbReference type="PDBsum" id="8SCB"/>
<dbReference type="PDBsum" id="8VFT"/>
<dbReference type="PDBsum" id="9BDL"/>
<dbReference type="PDBsum" id="9BDN"/>
<dbReference type="PDBsum" id="9BDP"/>
<dbReference type="PDBsum" id="9C8K"/>
<dbReference type="PDBsum" id="9F1B"/>
<dbReference type="PDBsum" id="9F1C"/>
<dbReference type="PDBsum" id="9F1D"/>
<dbReference type="EMDB" id="EMD-0098"/>
<dbReference type="EMDB" id="EMD-0099"/>
<dbReference type="EMDB" id="EMD-0100"/>
<dbReference type="EMDB" id="EMD-0192"/>
<dbReference type="EMDB" id="EMD-0194"/>
<dbReference type="EMDB" id="EMD-0195"/>
<dbReference type="EMDB" id="EMD-0197"/>
<dbReference type="EMDB" id="EMD-10181"/>
<dbReference type="EMDB" id="EMD-11459"/>
<dbReference type="EMDB" id="EMD-11590"/>
<dbReference type="EMDB" id="EMD-12631"/>
<dbReference type="EMDB" id="EMD-12756"/>
<dbReference type="EMDB" id="EMD-12757"/>
<dbReference type="EMDB" id="EMD-12758"/>
<dbReference type="EMDB" id="EMD-12759"/>
<dbReference type="EMDB" id="EMD-13114"/>
<dbReference type="EMDB" id="EMD-14751"/>
<dbReference type="EMDB" id="EMD-14752"/>
<dbReference type="EMDB" id="EMD-16052"/>
<dbReference type="EMDB" id="EMD-16232"/>
<dbReference type="EMDB" id="EMD-17367"/>
<dbReference type="EMDB" id="EMD-20248"/>
<dbReference type="EMDB" id="EMD-20249"/>
<dbReference type="EMDB" id="EMD-20255"/>
<dbReference type="EMDB" id="EMD-20256"/>
<dbReference type="EMDB" id="EMD-20257"/>
<dbReference type="EMDB" id="EMD-20258"/>
<dbReference type="EMDB" id="EMD-21529"/>
<dbReference type="EMDB" id="EMD-21530"/>
<dbReference type="EMDB" id="EMD-22432"/>
<dbReference type="EMDB" id="EMD-22433"/>
<dbReference type="EMDB" id="EMD-23785"/>
<dbReference type="EMDB" id="EMD-25527"/>
<dbReference type="EMDB" id="EMD-25528"/>
<dbReference type="EMDB" id="EMD-25529"/>
<dbReference type="EMDB" id="EMD-25530"/>
<dbReference type="EMDB" id="EMD-25531"/>
<dbReference type="EMDB" id="EMD-25532"/>
<dbReference type="EMDB" id="EMD-25533"/>
<dbReference type="EMDB" id="EMD-25534"/>
<dbReference type="EMDB" id="EMD-25535"/>
<dbReference type="EMDB" id="EMD-25536"/>
<dbReference type="EMDB" id="EMD-25537"/>
<dbReference type="EMDB" id="EMD-25538"/>
<dbReference type="EMDB" id="EMD-25539"/>
<dbReference type="EMDB" id="EMD-25540"/>
<dbReference type="EMDB" id="EMD-25541"/>
<dbReference type="EMDB" id="EMD-25542"/>
<dbReference type="EMDB" id="EMD-25543"/>
<dbReference type="EMDB" id="EMD-25544"/>
<dbReference type="EMDB" id="EMD-26035"/>
<dbReference type="EMDB" id="EMD-26036"/>
<dbReference type="EMDB" id="EMD-26444"/>
<dbReference type="EMDB" id="EMD-26445"/>
<dbReference type="EMDB" id="EMD-40344"/>
<dbReference type="EMDB" id="EMD-4130"/>
<dbReference type="EMDB" id="EMD-4131"/>
<dbReference type="EMDB" id="EMD-4132"/>
<dbReference type="EMDB" id="EMD-4133"/>
<dbReference type="EMDB" id="EMD-4134"/>
<dbReference type="EMDB" id="EMD-4135"/>
<dbReference type="EMDB" id="EMD-4136"/>
<dbReference type="EMDB" id="EMD-4137"/>
<dbReference type="EMDB" id="EMD-43189"/>
<dbReference type="EMDB" id="EMD-44461"/>
<dbReference type="EMDB" id="EMD-44463"/>
<dbReference type="EMDB" id="EMD-44464"/>
<dbReference type="EMDB" id="EMD-45307"/>
<dbReference type="EMDB" id="EMD-4729"/>
<dbReference type="EMDB" id="EMD-4735"/>
<dbReference type="EMDB" id="EMD-4737"/>
<dbReference type="EMDB" id="EMD-4745"/>
<dbReference type="EMDB" id="EMD-50124"/>
<dbReference type="EMDB" id="EMD-50125"/>
<dbReference type="EMDB" id="EMD-50126"/>
<dbReference type="EMDB" id="EMD-7834"/>
<dbReference type="EMDB" id="EMD-7836"/>
<dbReference type="EMDB" id="EMD-9237"/>
<dbReference type="EMDB" id="EMD-9239"/>
<dbReference type="EMDB" id="EMD-9240"/>
<dbReference type="EMDB" id="EMD-9242"/>
<dbReference type="SMR" id="G1SS70"/>
<dbReference type="FunCoup" id="G1SS70">
    <property type="interactions" value="1389"/>
</dbReference>
<dbReference type="IntAct" id="G1SS70">
    <property type="interactions" value="1"/>
</dbReference>
<dbReference type="STRING" id="9986.ENSOCUP00000006063"/>
<dbReference type="PaxDb" id="9986-ENSOCUP00000006063"/>
<dbReference type="Ensembl" id="ENSOCUT00000007010.3">
    <property type="protein sequence ID" value="ENSOCUP00000006063.2"/>
    <property type="gene ID" value="ENSOCUG00000007011.3"/>
</dbReference>
<dbReference type="Ensembl" id="ENSOCUT00000024660.1">
    <property type="protein sequence ID" value="ENSOCUP00000024017.1"/>
    <property type="gene ID" value="ENSOCUG00000022751.1"/>
</dbReference>
<dbReference type="Ensembl" id="ENSOCUT00000026147.1">
    <property type="protein sequence ID" value="ENSOCUP00000022874.1"/>
    <property type="gene ID" value="ENSOCUG00000023695.1"/>
</dbReference>
<dbReference type="GeneID" id="100354966"/>
<dbReference type="KEGG" id="ocu:100342838"/>
<dbReference type="KEGG" id="ocu:100348981"/>
<dbReference type="KEGG" id="ocu:100354966"/>
<dbReference type="CTD" id="6189"/>
<dbReference type="eggNOG" id="KOG1628">
    <property type="taxonomic scope" value="Eukaryota"/>
</dbReference>
<dbReference type="GeneTree" id="ENSGT00390000018433"/>
<dbReference type="HOGENOM" id="CLU_062507_0_1_1"/>
<dbReference type="OMA" id="TRFKGHE"/>
<dbReference type="OrthoDB" id="9834376at2759"/>
<dbReference type="TreeFam" id="TF300037"/>
<dbReference type="Proteomes" id="UP000001811">
    <property type="component" value="Chromosome 15"/>
</dbReference>
<dbReference type="Proteomes" id="UP000001811">
    <property type="component" value="Chromosome 4"/>
</dbReference>
<dbReference type="Proteomes" id="UP000001811">
    <property type="component" value="Chromosome X"/>
</dbReference>
<dbReference type="Bgee" id="ENSOCUG00000007011">
    <property type="expression patterns" value="Expressed in left lung and 15 other cell types or tissues"/>
</dbReference>
<dbReference type="GO" id="GO:0022627">
    <property type="term" value="C:cytosolic small ribosomal subunit"/>
    <property type="evidence" value="ECO:0007669"/>
    <property type="project" value="UniProtKB-UniRule"/>
</dbReference>
<dbReference type="GO" id="GO:0005730">
    <property type="term" value="C:nucleolus"/>
    <property type="evidence" value="ECO:0007669"/>
    <property type="project" value="UniProtKB-SubCell"/>
</dbReference>
<dbReference type="GO" id="GO:0003735">
    <property type="term" value="F:structural constituent of ribosome"/>
    <property type="evidence" value="ECO:0007669"/>
    <property type="project" value="UniProtKB-UniRule"/>
</dbReference>
<dbReference type="GO" id="GO:0030154">
    <property type="term" value="P:cell differentiation"/>
    <property type="evidence" value="ECO:0007669"/>
    <property type="project" value="UniProtKB-KW"/>
</dbReference>
<dbReference type="GO" id="GO:0006412">
    <property type="term" value="P:translation"/>
    <property type="evidence" value="ECO:0007669"/>
    <property type="project" value="UniProtKB-UniRule"/>
</dbReference>
<dbReference type="HAMAP" id="MF_03122">
    <property type="entry name" value="Ribosomal_eS1_euk"/>
    <property type="match status" value="1"/>
</dbReference>
<dbReference type="InterPro" id="IPR001593">
    <property type="entry name" value="Ribosomal_eS1"/>
</dbReference>
<dbReference type="InterPro" id="IPR018281">
    <property type="entry name" value="Ribosomal_eS1_CS"/>
</dbReference>
<dbReference type="InterPro" id="IPR027500">
    <property type="entry name" value="Ribosomal_eS1_euk"/>
</dbReference>
<dbReference type="PANTHER" id="PTHR11830">
    <property type="entry name" value="40S RIBOSOMAL PROTEIN S3A"/>
    <property type="match status" value="1"/>
</dbReference>
<dbReference type="Pfam" id="PF01015">
    <property type="entry name" value="Ribosomal_S3Ae"/>
    <property type="match status" value="1"/>
</dbReference>
<dbReference type="SMART" id="SM01397">
    <property type="entry name" value="Ribosomal_S3Ae"/>
    <property type="match status" value="1"/>
</dbReference>
<dbReference type="PROSITE" id="PS01191">
    <property type="entry name" value="RIBOSOMAL_S3AE"/>
    <property type="match status" value="1"/>
</dbReference>
<reference key="1">
    <citation type="journal article" date="2011" name="Nature">
        <title>A high-resolution map of human evolutionary constraint using 29 mammals.</title>
        <authorList>
            <person name="Lindblad-Toh K."/>
            <person name="Garber M."/>
            <person name="Zuk O."/>
            <person name="Lin M.F."/>
            <person name="Parker B.J."/>
            <person name="Washietl S."/>
            <person name="Kheradpour P."/>
            <person name="Ernst J."/>
            <person name="Jordan G."/>
            <person name="Mauceli E."/>
            <person name="Ward L.D."/>
            <person name="Lowe C.B."/>
            <person name="Holloway A.K."/>
            <person name="Clamp M."/>
            <person name="Gnerre S."/>
            <person name="Alfoldi J."/>
            <person name="Beal K."/>
            <person name="Chang J."/>
            <person name="Clawson H."/>
            <person name="Cuff J."/>
            <person name="Di Palma F."/>
            <person name="Fitzgerald S."/>
            <person name="Flicek P."/>
            <person name="Guttman M."/>
            <person name="Hubisz M.J."/>
            <person name="Jaffe D.B."/>
            <person name="Jungreis I."/>
            <person name="Kent W.J."/>
            <person name="Kostka D."/>
            <person name="Lara M."/>
            <person name="Martins A.L."/>
            <person name="Massingham T."/>
            <person name="Moltke I."/>
            <person name="Raney B.J."/>
            <person name="Rasmussen M.D."/>
            <person name="Robinson J."/>
            <person name="Stark A."/>
            <person name="Vilella A.J."/>
            <person name="Wen J."/>
            <person name="Xie X."/>
            <person name="Zody M.C."/>
            <person name="Baldwin J."/>
            <person name="Bloom T."/>
            <person name="Chin C.W."/>
            <person name="Heiman D."/>
            <person name="Nicol R."/>
            <person name="Nusbaum C."/>
            <person name="Young S."/>
            <person name="Wilkinson J."/>
            <person name="Worley K.C."/>
            <person name="Kovar C.L."/>
            <person name="Muzny D.M."/>
            <person name="Gibbs R.A."/>
            <person name="Cree A."/>
            <person name="Dihn H.H."/>
            <person name="Fowler G."/>
            <person name="Jhangiani S."/>
            <person name="Joshi V."/>
            <person name="Lee S."/>
            <person name="Lewis L.R."/>
            <person name="Nazareth L.V."/>
            <person name="Okwuonu G."/>
            <person name="Santibanez J."/>
            <person name="Warren W.C."/>
            <person name="Mardis E.R."/>
            <person name="Weinstock G.M."/>
            <person name="Wilson R.K."/>
            <person name="Delehaunty K."/>
            <person name="Dooling D."/>
            <person name="Fronik C."/>
            <person name="Fulton L."/>
            <person name="Fulton B."/>
            <person name="Graves T."/>
            <person name="Minx P."/>
            <person name="Sodergren E."/>
            <person name="Birney E."/>
            <person name="Margulies E.H."/>
            <person name="Herrero J."/>
            <person name="Green E.D."/>
            <person name="Haussler D."/>
            <person name="Siepel A."/>
            <person name="Goldman N."/>
            <person name="Pollard K.S."/>
            <person name="Pedersen J.S."/>
            <person name="Lander E.S."/>
            <person name="Kellis M."/>
        </authorList>
    </citation>
    <scope>NUCLEOTIDE SEQUENCE [LARGE SCALE GENOMIC DNA]</scope>
    <source>
        <strain>Thorbecke</strain>
    </source>
</reference>
<reference evidence="23 24" key="2">
    <citation type="journal article" date="2015" name="Mol. Cell">
        <title>Cryo-EM of ribosomal 80S complexes with termination factors reveals the translocated cricket paralysis virus IRES.</title>
        <authorList>
            <person name="Muhs M."/>
            <person name="Hilal T."/>
            <person name="Mielke T."/>
            <person name="Skabkin M.A."/>
            <person name="Sanbonmatsu K.Y."/>
            <person name="Pestova T.V."/>
            <person name="Spahn C.M."/>
        </authorList>
    </citation>
    <scope>STRUCTURE BY ELECTRON MICROSCOPY (9.00 ANGSTROMS) OF RIBOSOME</scope>
    <scope>FUNCTION</scope>
    <scope>SUBUNIT</scope>
    <scope>SUBCELLULAR LOCATION</scope>
</reference>
<reference evidence="21 22" key="3">
    <citation type="journal article" date="2015" name="Nature">
        <title>Structural basis for stop codon recognition in eukaryotes.</title>
        <authorList>
            <person name="Brown A."/>
            <person name="Shao S."/>
            <person name="Murray J."/>
            <person name="Hegde R.S."/>
            <person name="Ramakrishnan V."/>
        </authorList>
    </citation>
    <scope>STRUCTURE BY ELECTRON MICROSCOPY (3.45 ANGSTROMS) OF 21-233 OF RIBOSOME</scope>
    <scope>FUNCTION</scope>
    <scope>SUBCELLULAR LOCATION</scope>
    <scope>SUBUNIT</scope>
</reference>
<reference evidence="25 26" key="4">
    <citation type="journal article" date="2016" name="Cell">
        <title>Decoding mammalian ribosome-mRNA states by translational GTPase complexes.</title>
        <authorList>
            <person name="Shao S."/>
            <person name="Murray J."/>
            <person name="Brown A."/>
            <person name="Taunton J."/>
            <person name="Ramakrishnan V."/>
            <person name="Hegde R.S."/>
        </authorList>
    </citation>
    <scope>STRUCTURE BY ELECTRON MICROSCOPY (3.31 ANGSTROMS) OF RIBOSOME</scope>
    <scope>FUNCTION</scope>
    <scope>SUBCELLULAR LOCATION</scope>
    <scope>SUBUNIT</scope>
</reference>
<reference evidence="29" key="5">
    <citation type="journal article" date="2018" name="Cell Rep.">
        <title>tRNA translocation by the eukaryotic 80S ribosome and the impact of GTP hydrolysis.</title>
        <authorList>
            <person name="Flis J."/>
            <person name="Holm M."/>
            <person name="Rundlet E.J."/>
            <person name="Loerke J."/>
            <person name="Hilal T."/>
            <person name="Dabrowski M."/>
            <person name="Burger J."/>
            <person name="Mielke T."/>
            <person name="Blanchard S.C."/>
            <person name="Spahn C.M.T."/>
            <person name="Budkevich T.V."/>
        </authorList>
    </citation>
    <scope>STRUCTURE BY ELECTRON MICROSCOPY (3.60 ANGSTROMS) OF 22-233 OF RIBOSOME</scope>
    <scope>FUNCTION</scope>
    <scope>SUBCELLULAR LOCATION</scope>
    <scope>SUBUNIT</scope>
</reference>
<reference evidence="27 28" key="6">
    <citation type="journal article" date="2018" name="Elife">
        <title>Dual tRNA mimicry in the Cricket paralysis virus IRES uncovers an unexpected similarity with the Hepatitis C Virus IRES.</title>
        <authorList>
            <person name="Pisareva V.P."/>
            <person name="Pisarev A.V."/>
            <person name="Fernandez I.S."/>
        </authorList>
    </citation>
    <scope>STRUCTURE BY ELECTRON MICROSCOPY (3.20 ANGSTROMS) OF RIBOSOME</scope>
    <scope>SUBCELLULAR LOCATION</scope>
    <scope>SUBUNIT</scope>
</reference>
<reference evidence="32 33" key="7">
    <citation type="journal article" date="2018" name="Elife">
        <title>Structures of translationally inactive mammalian ribosomes.</title>
        <authorList>
            <person name="Brown A."/>
            <person name="Baird M.R."/>
            <person name="Yip M.C."/>
            <person name="Murray J."/>
            <person name="Shao S."/>
        </authorList>
    </citation>
    <scope>STRUCTURE BY ELECTRON MICROSCOPY (3.30 ANGSTROMS) OF 21-233 OF RIBOSOME</scope>
    <scope>SUBCELLULAR LOCATION</scope>
    <scope>SUBUNIT</scope>
</reference>
<reference evidence="30 31" key="8">
    <citation type="journal article" date="2018" name="Mol. Cell">
        <title>ZNF598 is a quality control sensor of collided ribosomes.</title>
        <authorList>
            <person name="Juszkiewicz S."/>
            <person name="Chandrasekaran V."/>
            <person name="Lin Z."/>
            <person name="Kraatz S."/>
            <person name="Ramakrishnan V."/>
            <person name="Hegde R.S."/>
        </authorList>
    </citation>
    <scope>STRUCTURE BY ELECTRON MICROSCOPY (3.80 ANGSTROMS) OF RIBOSOME</scope>
    <scope>SUBCELLULAR LOCATION</scope>
    <scope>SUBUNIT</scope>
</reference>
<reference evidence="36 37" key="9">
    <citation type="journal article" date="2019" name="Elife">
        <title>Structural and mutational analysis of the ribosome-arresting human XBP1u.</title>
        <authorList>
            <person name="Shanmuganathan V."/>
            <person name="Schiller N."/>
            <person name="Magoulopoulou A."/>
            <person name="Cheng J."/>
            <person name="Braunger K."/>
            <person name="Cymer F."/>
            <person name="Berninghausen O."/>
            <person name="Beatrix B."/>
            <person name="Kohno K."/>
            <person name="von Heijne G."/>
            <person name="Beckmann R."/>
        </authorList>
    </citation>
    <scope>STRUCTURE BY ELECTRON MICROSCOPY (3.00 ANGSTROMS) OF 21-233 OF RIBOSOME</scope>
    <scope>SUBCELLULAR LOCATION</scope>
    <scope>SUBUNIT</scope>
</reference>
<reference evidence="34 35" key="10">
    <citation type="journal article" date="2019" name="EMBO J.">
        <title>The Israeli acute paralysis virus IRES captures host ribosomes by mimicking a ribosomal state with hybrid tRNAs.</title>
        <authorList>
            <person name="Acosta-Reyes F."/>
            <person name="Neupane R."/>
            <person name="Frank J."/>
            <person name="Fernandez I.S."/>
        </authorList>
    </citation>
    <scope>STRUCTURE BY ELECTRON MICROSCOPY (3.10 ANGSTROMS) OF RIBOSOME</scope>
    <scope>SUBCELLULAR LOCATION</scope>
    <scope>SUBUNIT</scope>
</reference>
<reference evidence="38" key="11">
    <citation type="journal article" date="2019" name="Nat. Struct. Mol. Biol.">
        <title>Mechanism of ribosome stalling during translation of a poly(A) tail.</title>
        <authorList>
            <person name="Chandrasekaran V."/>
            <person name="Juszkiewicz S."/>
            <person name="Choi J."/>
            <person name="Puglisi J.D."/>
            <person name="Brown A."/>
            <person name="Shao S."/>
            <person name="Ramakrishnan V."/>
            <person name="Hegde R.S."/>
        </authorList>
    </citation>
    <scope>STRUCTURE BY ELECTRON MICROSCOPY (2.80 ANGSTROMS) OF RIBOSOME</scope>
    <scope>SUBCELLULAR LOCATION</scope>
    <scope>SUBUNIT</scope>
</reference>
<reference evidence="41 42" key="12">
    <citation type="journal article" date="2020" name="Cell Rep.">
        <title>The Halastavi arva virus intergenic region IRES promotes translation by the simplest possible initiation mechanism.</title>
        <authorList>
            <person name="Abaeva I.S."/>
            <person name="Vicens Q."/>
            <person name="Bochler A."/>
            <person name="Soufari H."/>
            <person name="Simonetti A."/>
            <person name="Pestova T.V."/>
            <person name="Hashem Y."/>
            <person name="Hellen C.U.T."/>
        </authorList>
    </citation>
    <scope>STRUCTURE BY ELECTRON MICROSCOPY (3.49 ANGSTROMS) OF 21-233 OF RIBOSOME</scope>
    <scope>SUBCELLULAR LOCATION</scope>
    <scope>SUBUNIT</scope>
</reference>
<reference evidence="39 40" key="13">
    <citation type="journal article" date="2020" name="Elife">
        <title>A complex IRES at the 5'-UTR of a viral mRNA assembles a functional 48S complex via an uAUG intermediate.</title>
        <authorList>
            <person name="Neupane R."/>
            <person name="Pisareva V.P."/>
            <person name="Rodriguez C.F."/>
            <person name="Pisarev A.V."/>
            <person name="Fernandez I.S."/>
        </authorList>
    </citation>
    <scope>STRUCTURE BY ELECTRON MICROSCOPY (3.00 ANGSTROMS) OF RIBOSOME</scope>
    <scope>SUBCELLULAR LOCATION</scope>
    <scope>SUBUNIT</scope>
</reference>
<reference evidence="43" key="14">
    <citation type="journal article" date="2023" name="Nature">
        <title>A molecular network of conserved factors keeps ribosomes dormant in the egg.</title>
        <authorList>
            <person name="Leesch F."/>
            <person name="Lorenzo-Orts L."/>
            <person name="Pribitzer C."/>
            <person name="Grishkovskaya I."/>
            <person name="Roehsner J."/>
            <person name="Chugunova A."/>
            <person name="Matzinger M."/>
            <person name="Roitinger E."/>
            <person name="Belacic K."/>
            <person name="Kandolf S."/>
            <person name="Lin T.Y."/>
            <person name="Mechtler K."/>
            <person name="Meinhart A."/>
            <person name="Haselbach D."/>
            <person name="Pauli A."/>
        </authorList>
    </citation>
    <scope>STRUCTURE BY ELECTRON MICROSCOPY (2.30 ANGSTROMS) OF RIBOSOME</scope>
    <scope>SUBCELLULAR LOCATION</scope>
    <scope>SUBUNIT</scope>
</reference>
<reference evidence="44 45" key="15">
    <citation type="journal article" date="2022" name="EMBO J.">
        <title>Molecular architecture of 40S translation initiation complexes on the hepatitis C virus IRES.</title>
        <authorList>
            <person name="Brown Z.P."/>
            <person name="Abaeva I.S."/>
            <person name="De S."/>
            <person name="Hellen C.U.T."/>
            <person name="Pestova T.V."/>
            <person name="Frank J."/>
        </authorList>
    </citation>
    <scope>STRUCTURE BY ELECTRON MICROSCOPY (3.50 ANGSTROMS) OF RIBOSOME</scope>
    <scope>SUBCELLULAR LOCATION</scope>
    <scope>SUBUNIT</scope>
</reference>
<reference evidence="46 47" key="16">
    <citation type="journal article" date="2022" name="Mol. Cell">
        <title>Direct epitranscriptomic regulation of mammalian translation initiation through N4-acetylcytidine.</title>
        <authorList>
            <person name="Arango D."/>
            <person name="Sturgill D."/>
            <person name="Yang R."/>
            <person name="Kanai T."/>
            <person name="Bauer P."/>
            <person name="Roy J."/>
            <person name="Wang Z."/>
            <person name="Hosogane M."/>
            <person name="Schiffers S."/>
            <person name="Oberdoerffer S."/>
        </authorList>
    </citation>
    <scope>STRUCTURE BY ELECTRON MICROSCOPY (2.80 ANGSTROMS) OF 21-233 OF RIBOSOME</scope>
    <scope>SUBCELLULAR LOCATION</scope>
    <scope>SUBUNIT</scope>
</reference>
<reference evidence="48 49" key="17">
    <citation type="journal article" date="2022" name="Science">
        <title>Structure of the mammalian ribosome as it decodes the selenocysteine UGA codon.</title>
        <authorList>
            <person name="Hilal T."/>
            <person name="Killam B.Y."/>
            <person name="Grozdanovic M."/>
            <person name="Dobosz-Bartoszek M."/>
            <person name="Loerke J."/>
            <person name="Buerger J."/>
            <person name="Mielke T."/>
            <person name="Copeland P.R."/>
            <person name="Simonovic M."/>
            <person name="Spahn C.M.T."/>
        </authorList>
    </citation>
    <scope>STRUCTURE BY ELECTRON MICROSCOPY (2.80 ANGSTROMS) OF RIBOSOME</scope>
    <scope>SUBCELLULAR LOCATION</scope>
    <scope>SUBUNIT</scope>
</reference>
<comment type="function">
    <text evidence="3 5 6 7 11">Component of the small ribosomal subunit (PubMed:25601755, PubMed:26245381, PubMed:27863242, PubMed:30517857). The ribosome is a large ribonucleoprotein complex responsible for the synthesis of proteins in the cell. Part of the small subunit (SSU) processome, first precursor of the small eukaryotic ribosomal subunit (PubMed:25601755, PubMed:26245381, PubMed:27863242, PubMed:30517857). During the assembly of the SSU processome in the nucleolus, many ribosome biogenesis factors, an RNA chaperone and ribosomal proteins associate with the nascent pre-rRNA and work in concert to generate RNA folding, modifications, rearrangements and cleavage as well as targeted degradation of pre-ribosomal RNA by the RNA exosome (By similarity).</text>
</comment>
<comment type="subunit">
    <text evidence="5 6 7 8 9 10 11 12 13 14 15 16 17 18 19 20">Component of the small ribosomal subunit. Mature ribosomes consist of a small (40S) and a large (60S) subunit. The 40S subunit contains about 33 different proteins and 1 molecule of RNA (18S). The 60S subunit contains about 49 different proteins and 3 molecules of RNA (28S, 5.8S and 5S). Identified in a IGF2BP1-dependent mRNP granule complex containing untranslated mRNAs. Binds with high affinity to IPO4. Interacts with DDIT3. Part of the small subunit (SSU) processome, composed of more than 70 proteins and the RNA chaperone small nucleolar RNA (snoRNA) U3.</text>
</comment>
<comment type="subcellular location">
    <subcellularLocation>
        <location evidence="5 6 7 8 9 10 11 12 13 14 15 16 17 18 19 20">Cytoplasm</location>
    </subcellularLocation>
    <subcellularLocation>
        <location evidence="3">Nucleus</location>
    </subcellularLocation>
    <subcellularLocation>
        <location evidence="1">Nucleus</location>
        <location evidence="1">Nucleolus</location>
    </subcellularLocation>
    <text evidence="1">Localized in cytoplasmic mRNP granules containing untranslated mRNAs.</text>
</comment>
<comment type="PTM">
    <text evidence="1">ADP-ribosylated at Tyr-155 by PARP1 in presence of HPF1.</text>
</comment>
<comment type="similarity">
    <text evidence="3">Belongs to the eukaryotic ribosomal protein eS1 family.</text>
</comment>
<feature type="initiator methionine" description="Removed" evidence="1 3">
    <location>
        <position position="1"/>
    </location>
</feature>
<feature type="chain" id="PRO_0000460053" description="Small ribosomal subunit protein eS1">
    <location>
        <begin position="2"/>
        <end position="264"/>
    </location>
</feature>
<feature type="region of interest" description="Disordered" evidence="4">
    <location>
        <begin position="232"/>
        <end position="264"/>
    </location>
</feature>
<feature type="compositionally biased region" description="Basic and acidic residues" evidence="4">
    <location>
        <begin position="242"/>
        <end position="255"/>
    </location>
</feature>
<feature type="modified residue" description="N6-acetyllysine; alternate" evidence="1">
    <location>
        <position position="34"/>
    </location>
</feature>
<feature type="modified residue" description="N6-acetyllysine" evidence="2">
    <location>
        <position position="56"/>
    </location>
</feature>
<feature type="modified residue" description="ADP-ribosyltyrosine" evidence="1">
    <location>
        <position position="155"/>
    </location>
</feature>
<feature type="modified residue" description="Phosphoserine" evidence="1">
    <location>
        <position position="236"/>
    </location>
</feature>
<feature type="modified residue" description="Phosphoserine" evidence="2">
    <location>
        <position position="237"/>
    </location>
</feature>
<feature type="modified residue" description="N6-acetyllysine; alternate" evidence="1">
    <location>
        <position position="249"/>
    </location>
</feature>
<feature type="modified residue" description="Phosphotyrosine" evidence="1">
    <location>
        <position position="256"/>
    </location>
</feature>
<feature type="modified residue" description="Phosphoserine" evidence="1">
    <location>
        <position position="263"/>
    </location>
</feature>
<feature type="cross-link" description="Glycyl lysine isopeptide (Lys-Gly) (interchain with G-Cter in SUMO2); alternate" evidence="1">
    <location>
        <position position="34"/>
    </location>
</feature>
<feature type="cross-link" description="Glycyl lysine isopeptide (Lys-Gly) (interchain with G-Cter in SUMO2); alternate" evidence="1">
    <location>
        <position position="249"/>
    </location>
</feature>
<feature type="helix" evidence="51">
    <location>
        <begin position="24"/>
        <end position="26"/>
    </location>
</feature>
<feature type="strand" evidence="51">
    <location>
        <begin position="27"/>
        <end position="34"/>
    </location>
</feature>
<feature type="strand" evidence="50">
    <location>
        <begin position="39"/>
        <end position="41"/>
    </location>
</feature>
<feature type="strand" evidence="51">
    <location>
        <begin position="43"/>
        <end position="50"/>
    </location>
</feature>
<feature type="strand" evidence="50">
    <location>
        <begin position="54"/>
        <end position="56"/>
    </location>
</feature>
<feature type="turn" evidence="50">
    <location>
        <begin position="58"/>
        <end position="61"/>
    </location>
</feature>
<feature type="strand" evidence="50">
    <location>
        <begin position="62"/>
        <end position="64"/>
    </location>
</feature>
<feature type="strand" evidence="51">
    <location>
        <begin position="66"/>
        <end position="70"/>
    </location>
</feature>
<feature type="helix" evidence="51">
    <location>
        <begin position="71"/>
        <end position="73"/>
    </location>
</feature>
<feature type="strand" evidence="51">
    <location>
        <begin position="75"/>
        <end position="77"/>
    </location>
</feature>
<feature type="strand" evidence="51">
    <location>
        <begin position="80"/>
        <end position="94"/>
    </location>
</feature>
<feature type="strand" evidence="51">
    <location>
        <begin position="96"/>
        <end position="105"/>
    </location>
</feature>
<feature type="helix" evidence="51">
    <location>
        <begin position="107"/>
        <end position="113"/>
    </location>
</feature>
<feature type="strand" evidence="51">
    <location>
        <begin position="116"/>
        <end position="118"/>
    </location>
</feature>
<feature type="strand" evidence="51">
    <location>
        <begin position="120"/>
        <end position="125"/>
    </location>
</feature>
<feature type="strand" evidence="51">
    <location>
        <begin position="130"/>
        <end position="132"/>
    </location>
</feature>
<feature type="strand" evidence="51">
    <location>
        <begin position="134"/>
        <end position="143"/>
    </location>
</feature>
<feature type="helix" evidence="51">
    <location>
        <begin position="158"/>
        <end position="177"/>
    </location>
</feature>
<feature type="helix" evidence="51">
    <location>
        <begin position="181"/>
        <end position="186"/>
    </location>
</feature>
<feature type="turn" evidence="51">
    <location>
        <begin position="187"/>
        <end position="191"/>
    </location>
</feature>
<feature type="helix" evidence="51">
    <location>
        <begin position="192"/>
        <end position="200"/>
    </location>
</feature>
<feature type="helix" evidence="51">
    <location>
        <begin position="201"/>
        <end position="203"/>
    </location>
</feature>
<feature type="strand" evidence="52">
    <location>
        <begin position="207"/>
        <end position="209"/>
    </location>
</feature>
<feature type="strand" evidence="51">
    <location>
        <begin position="211"/>
        <end position="219"/>
    </location>
</feature>
<feature type="helix" evidence="51">
    <location>
        <begin position="225"/>
        <end position="231"/>
    </location>
</feature>
<accession>G1SS70</accession>
<evidence type="ECO:0000250" key="1">
    <source>
        <dbReference type="UniProtKB" id="P61247"/>
    </source>
</evidence>
<evidence type="ECO:0000250" key="2">
    <source>
        <dbReference type="UniProtKB" id="P97351"/>
    </source>
</evidence>
<evidence type="ECO:0000255" key="3">
    <source>
        <dbReference type="HAMAP-Rule" id="MF_03122"/>
    </source>
</evidence>
<evidence type="ECO:0000256" key="4">
    <source>
        <dbReference type="SAM" id="MobiDB-lite"/>
    </source>
</evidence>
<evidence type="ECO:0000269" key="5">
    <source>
    </source>
</evidence>
<evidence type="ECO:0000269" key="6">
    <source>
    </source>
</evidence>
<evidence type="ECO:0000269" key="7">
    <source>
    </source>
</evidence>
<evidence type="ECO:0000269" key="8">
    <source>
    </source>
</evidence>
<evidence type="ECO:0000269" key="9">
    <source>
    </source>
</evidence>
<evidence type="ECO:0000269" key="10">
    <source>
    </source>
</evidence>
<evidence type="ECO:0000269" key="11">
    <source>
    </source>
</evidence>
<evidence type="ECO:0000269" key="12">
    <source>
    </source>
</evidence>
<evidence type="ECO:0000269" key="13">
    <source>
    </source>
</evidence>
<evidence type="ECO:0000269" key="14">
    <source>
    </source>
</evidence>
<evidence type="ECO:0000269" key="15">
    <source>
    </source>
</evidence>
<evidence type="ECO:0000269" key="16">
    <source>
    </source>
</evidence>
<evidence type="ECO:0000269" key="17">
    <source>
    </source>
</evidence>
<evidence type="ECO:0000269" key="18">
    <source>
    </source>
</evidence>
<evidence type="ECO:0000269" key="19">
    <source>
    </source>
</evidence>
<evidence type="ECO:0000269" key="20">
    <source>
    </source>
</evidence>
<evidence type="ECO:0007744" key="21">
    <source>
        <dbReference type="PDB" id="3JAG"/>
    </source>
</evidence>
<evidence type="ECO:0007744" key="22">
    <source>
        <dbReference type="PDB" id="3JAH"/>
    </source>
</evidence>
<evidence type="ECO:0007744" key="23">
    <source>
        <dbReference type="PDB" id="4D5L"/>
    </source>
</evidence>
<evidence type="ECO:0007744" key="24">
    <source>
        <dbReference type="PDB" id="4D61"/>
    </source>
</evidence>
<evidence type="ECO:0007744" key="25">
    <source>
        <dbReference type="PDB" id="5LZS"/>
    </source>
</evidence>
<evidence type="ECO:0007744" key="26">
    <source>
        <dbReference type="PDB" id="5LZT"/>
    </source>
</evidence>
<evidence type="ECO:0007744" key="27">
    <source>
        <dbReference type="PDB" id="6D90"/>
    </source>
</evidence>
<evidence type="ECO:0007744" key="28">
    <source>
        <dbReference type="PDB" id="6D9J"/>
    </source>
</evidence>
<evidence type="ECO:0007744" key="29">
    <source>
        <dbReference type="PDB" id="6GZ3"/>
    </source>
</evidence>
<evidence type="ECO:0007744" key="30">
    <source>
        <dbReference type="PDB" id="6HCF"/>
    </source>
</evidence>
<evidence type="ECO:0007744" key="31">
    <source>
        <dbReference type="PDB" id="6HCJ"/>
    </source>
</evidence>
<evidence type="ECO:0007744" key="32">
    <source>
        <dbReference type="PDB" id="6MTB"/>
    </source>
</evidence>
<evidence type="ECO:0007744" key="33">
    <source>
        <dbReference type="PDB" id="6MTC"/>
    </source>
</evidence>
<evidence type="ECO:0007744" key="34">
    <source>
        <dbReference type="PDB" id="6P4G"/>
    </source>
</evidence>
<evidence type="ECO:0007744" key="35">
    <source>
        <dbReference type="PDB" id="6P4H"/>
    </source>
</evidence>
<evidence type="ECO:0007744" key="36">
    <source>
        <dbReference type="PDB" id="6R5Q"/>
    </source>
</evidence>
<evidence type="ECO:0007744" key="37">
    <source>
        <dbReference type="PDB" id="6R6G"/>
    </source>
</evidence>
<evidence type="ECO:0007744" key="38">
    <source>
        <dbReference type="PDB" id="6SGC"/>
    </source>
</evidence>
<evidence type="ECO:0007744" key="39">
    <source>
        <dbReference type="PDB" id="6W2S"/>
    </source>
</evidence>
<evidence type="ECO:0007744" key="40">
    <source>
        <dbReference type="PDB" id="6W2T"/>
    </source>
</evidence>
<evidence type="ECO:0007744" key="41">
    <source>
        <dbReference type="PDB" id="6ZVK"/>
    </source>
</evidence>
<evidence type="ECO:0007744" key="42">
    <source>
        <dbReference type="PDB" id="7A01"/>
    </source>
</evidence>
<evidence type="ECO:0007744" key="43">
    <source>
        <dbReference type="PDB" id="7OYD"/>
    </source>
</evidence>
<evidence type="ECO:0007744" key="44">
    <source>
        <dbReference type="PDB" id="7SYO"/>
    </source>
</evidence>
<evidence type="ECO:0007744" key="45">
    <source>
        <dbReference type="PDB" id="7SYP"/>
    </source>
</evidence>
<evidence type="ECO:0007744" key="46">
    <source>
        <dbReference type="PDB" id="7UCJ"/>
    </source>
</evidence>
<evidence type="ECO:0007744" key="47">
    <source>
        <dbReference type="PDB" id="7UCK"/>
    </source>
</evidence>
<evidence type="ECO:0007744" key="48">
    <source>
        <dbReference type="PDB" id="7ZJW"/>
    </source>
</evidence>
<evidence type="ECO:0007744" key="49">
    <source>
        <dbReference type="PDB" id="7ZJX"/>
    </source>
</evidence>
<evidence type="ECO:0007829" key="50">
    <source>
        <dbReference type="PDB" id="6P4G"/>
    </source>
</evidence>
<evidence type="ECO:0007829" key="51">
    <source>
        <dbReference type="PDB" id="7JQB"/>
    </source>
</evidence>
<evidence type="ECO:0007829" key="52">
    <source>
        <dbReference type="PDB" id="7JQC"/>
    </source>
</evidence>
<name>RS3A_RABIT</name>
<organism>
    <name type="scientific">Oryctolagus cuniculus</name>
    <name type="common">Rabbit</name>
    <dbReference type="NCBI Taxonomy" id="9986"/>
    <lineage>
        <taxon>Eukaryota</taxon>
        <taxon>Metazoa</taxon>
        <taxon>Chordata</taxon>
        <taxon>Craniata</taxon>
        <taxon>Vertebrata</taxon>
        <taxon>Euteleostomi</taxon>
        <taxon>Mammalia</taxon>
        <taxon>Eutheria</taxon>
        <taxon>Euarchontoglires</taxon>
        <taxon>Glires</taxon>
        <taxon>Lagomorpha</taxon>
        <taxon>Leporidae</taxon>
        <taxon>Oryctolagus</taxon>
    </lineage>
</organism>
<proteinExistence type="evidence at protein level"/>
<sequence>MAVGKNKRLTKGGKKGAKKKVVDPFSKKDWYDVKAPAMFNIRNIGKTLVTRTQGTKIASDGLKGRVFEVSLADLQNDEVAFRKFKLITEDVQGKNCLTNFHGMDLTRDKMCSMVKKWQTMIEAHVDVKTTDGYLLRLFCVGFTKKRNNQIRKTSYAQHQQVRQIRKKMMEIMTREVQTNDLKEVVNKLIPDSIGKDIEKACQSIYPLHDVFVRKVKMLKKPKFELGKLMELHGEGSSSGKATGDETGAKVERADGYEPPVQESV</sequence>